<name>MATK_OENGL</name>
<dbReference type="EMBL" id="EU262890">
    <property type="protein sequence ID" value="ABX10018.1"/>
    <property type="molecule type" value="Genomic_DNA"/>
</dbReference>
<dbReference type="RefSeq" id="YP_001687264.1">
    <property type="nucleotide sequence ID" value="NC_010360.2"/>
</dbReference>
<dbReference type="GeneID" id="5955305"/>
<dbReference type="GO" id="GO:0009507">
    <property type="term" value="C:chloroplast"/>
    <property type="evidence" value="ECO:0007669"/>
    <property type="project" value="UniProtKB-SubCell"/>
</dbReference>
<dbReference type="GO" id="GO:0003723">
    <property type="term" value="F:RNA binding"/>
    <property type="evidence" value="ECO:0007669"/>
    <property type="project" value="UniProtKB-KW"/>
</dbReference>
<dbReference type="GO" id="GO:0006397">
    <property type="term" value="P:mRNA processing"/>
    <property type="evidence" value="ECO:0007669"/>
    <property type="project" value="UniProtKB-KW"/>
</dbReference>
<dbReference type="GO" id="GO:0008380">
    <property type="term" value="P:RNA splicing"/>
    <property type="evidence" value="ECO:0007669"/>
    <property type="project" value="UniProtKB-UniRule"/>
</dbReference>
<dbReference type="GO" id="GO:0008033">
    <property type="term" value="P:tRNA processing"/>
    <property type="evidence" value="ECO:0007669"/>
    <property type="project" value="UniProtKB-KW"/>
</dbReference>
<dbReference type="HAMAP" id="MF_01390">
    <property type="entry name" value="MatK"/>
    <property type="match status" value="1"/>
</dbReference>
<dbReference type="InterPro" id="IPR024937">
    <property type="entry name" value="Domain_X"/>
</dbReference>
<dbReference type="InterPro" id="IPR002866">
    <property type="entry name" value="Maturase_MatK"/>
</dbReference>
<dbReference type="InterPro" id="IPR024942">
    <property type="entry name" value="Maturase_MatK_N"/>
</dbReference>
<dbReference type="PANTHER" id="PTHR34811">
    <property type="entry name" value="MATURASE K"/>
    <property type="match status" value="1"/>
</dbReference>
<dbReference type="PANTHER" id="PTHR34811:SF1">
    <property type="entry name" value="MATURASE K"/>
    <property type="match status" value="1"/>
</dbReference>
<dbReference type="Pfam" id="PF01348">
    <property type="entry name" value="Intron_maturas2"/>
    <property type="match status" value="1"/>
</dbReference>
<dbReference type="Pfam" id="PF01824">
    <property type="entry name" value="MatK_N"/>
    <property type="match status" value="1"/>
</dbReference>
<proteinExistence type="inferred from homology"/>
<organism>
    <name type="scientific">Oenothera glazioviana</name>
    <name type="common">Large-flowered evening primrose</name>
    <name type="synonym">Oenothera erythrosepala</name>
    <dbReference type="NCBI Taxonomy" id="482428"/>
    <lineage>
        <taxon>Eukaryota</taxon>
        <taxon>Viridiplantae</taxon>
        <taxon>Streptophyta</taxon>
        <taxon>Embryophyta</taxon>
        <taxon>Tracheophyta</taxon>
        <taxon>Spermatophyta</taxon>
        <taxon>Magnoliopsida</taxon>
        <taxon>eudicotyledons</taxon>
        <taxon>Gunneridae</taxon>
        <taxon>Pentapetalae</taxon>
        <taxon>rosids</taxon>
        <taxon>malvids</taxon>
        <taxon>Myrtales</taxon>
        <taxon>Onagraceae</taxon>
        <taxon>Onagroideae</taxon>
        <taxon>Onagreae</taxon>
        <taxon>Oenothera</taxon>
    </lineage>
</organism>
<comment type="function">
    <text evidence="1">Usually encoded in the trnK tRNA gene intron. Probably assists in splicing its own and other chloroplast group II introns.</text>
</comment>
<comment type="subcellular location">
    <subcellularLocation>
        <location>Plastid</location>
        <location>Chloroplast</location>
    </subcellularLocation>
</comment>
<comment type="similarity">
    <text evidence="1">Belongs to the intron maturase 2 family. MatK subfamily.</text>
</comment>
<keyword id="KW-0150">Chloroplast</keyword>
<keyword id="KW-0507">mRNA processing</keyword>
<keyword id="KW-0934">Plastid</keyword>
<keyword id="KW-0694">RNA-binding</keyword>
<keyword id="KW-0819">tRNA processing</keyword>
<geneLocation type="chloroplast"/>
<protein>
    <recommendedName>
        <fullName evidence="1">Maturase K</fullName>
    </recommendedName>
    <alternativeName>
        <fullName evidence="1">Intron maturase</fullName>
    </alternativeName>
</protein>
<reference key="1">
    <citation type="journal article" date="2008" name="Nucleic Acids Res.">
        <title>The complete nucleotide sequences of the five genetically distinct plastid genomes of Oenothera, subsection Oenothera: I. Sequence evaluation and plastome evolution.</title>
        <authorList>
            <person name="Greiner S."/>
            <person name="Wang X."/>
            <person name="Rauwolf U."/>
            <person name="Silber M.V."/>
            <person name="Mayer K."/>
            <person name="Meurer J."/>
            <person name="Haberer G."/>
            <person name="Herrmann R.G."/>
        </authorList>
    </citation>
    <scope>NUCLEOTIDE SEQUENCE [LARGE SCALE GENOMIC DNA]</scope>
    <source>
        <strain>cv. Rr-lamarckiana Sweden</strain>
    </source>
</reference>
<gene>
    <name evidence="1" type="primary">matK</name>
</gene>
<sequence length="512" mass="60006">MEEFPGYFELDRSRQHDFLYPLIFRESIYALAHDHGLNRNRSTLFENEVDYDKKYSLIIVKRLITRMYQRNHLIISANGSVQNPFWGHNKNLYSKILSEGFAVIVEIPFSLRVLSSFERKEKDIAKSPTLRSIHSIFPFLEDQFSHLDYLSHVLIPYPIHLEIAVQTLRYWVKDASSLHLLRIFLHEYWNSFSTPKKHITLFLKGNSRFFLFLYNSYVCEYESIFLFIRNQSSHFQSTSSGVFFERILFYVKIDHLVEVFVGTDFLDIRSFFKDPNMHYVRYQGKSILASKDTPLLMNKWKYYLVNLWQYHFSVWSQPGRININQLGKYSLDFLGYFSNVQLKSSVVRNQTLENSFLINNAMKKLETTVPILPLIGSLSRAKFCNALGHPISKPTRTDSSDSDIIDRFVRICRNLSHYHSGSSKKKSLYRIKYILRLSCVKTLARKHKSSVRAFLKRLGSELGDEFLTEEGVVLAVIFPKASGRLYRGRIWYLDIPCINDRVGDAEGSIFTK</sequence>
<evidence type="ECO:0000255" key="1">
    <source>
        <dbReference type="HAMAP-Rule" id="MF_01390"/>
    </source>
</evidence>
<accession>B0Z525</accession>
<feature type="chain" id="PRO_0000355953" description="Maturase K">
    <location>
        <begin position="1"/>
        <end position="512"/>
    </location>
</feature>